<keyword id="KW-0030">Aminoacyl-tRNA synthetase</keyword>
<keyword id="KW-0067">ATP-binding</keyword>
<keyword id="KW-0963">Cytoplasm</keyword>
<keyword id="KW-0436">Ligase</keyword>
<keyword id="KW-0479">Metal-binding</keyword>
<keyword id="KW-0547">Nucleotide-binding</keyword>
<keyword id="KW-0648">Protein biosynthesis</keyword>
<keyword id="KW-1185">Reference proteome</keyword>
<keyword id="KW-0862">Zinc</keyword>
<name>SYI_AROAE</name>
<feature type="chain" id="PRO_0000098343" description="Isoleucine--tRNA ligase">
    <location>
        <begin position="1"/>
        <end position="939"/>
    </location>
</feature>
<feature type="short sequence motif" description="'HIGH' region">
    <location>
        <begin position="58"/>
        <end position="68"/>
    </location>
</feature>
<feature type="short sequence motif" description="'KMSKS' region">
    <location>
        <begin position="615"/>
        <end position="619"/>
    </location>
</feature>
<feature type="binding site" evidence="1">
    <location>
        <position position="574"/>
    </location>
    <ligand>
        <name>L-isoleucyl-5'-AMP</name>
        <dbReference type="ChEBI" id="CHEBI:178002"/>
    </ligand>
</feature>
<feature type="binding site" evidence="1">
    <location>
        <position position="618"/>
    </location>
    <ligand>
        <name>ATP</name>
        <dbReference type="ChEBI" id="CHEBI:30616"/>
    </ligand>
</feature>
<feature type="binding site" evidence="1">
    <location>
        <position position="902"/>
    </location>
    <ligand>
        <name>Zn(2+)</name>
        <dbReference type="ChEBI" id="CHEBI:29105"/>
    </ligand>
</feature>
<feature type="binding site" evidence="1">
    <location>
        <position position="905"/>
    </location>
    <ligand>
        <name>Zn(2+)</name>
        <dbReference type="ChEBI" id="CHEBI:29105"/>
    </ligand>
</feature>
<feature type="binding site" evidence="1">
    <location>
        <position position="922"/>
    </location>
    <ligand>
        <name>Zn(2+)</name>
        <dbReference type="ChEBI" id="CHEBI:29105"/>
    </ligand>
</feature>
<feature type="binding site" evidence="1">
    <location>
        <position position="925"/>
    </location>
    <ligand>
        <name>Zn(2+)</name>
        <dbReference type="ChEBI" id="CHEBI:29105"/>
    </ligand>
</feature>
<reference key="1">
    <citation type="journal article" date="2005" name="Arch. Microbiol.">
        <title>The genome sequence of an anaerobic aromatic-degrading denitrifying bacterium, strain EbN1.</title>
        <authorList>
            <person name="Rabus R."/>
            <person name="Kube M."/>
            <person name="Heider J."/>
            <person name="Beck A."/>
            <person name="Heitmann K."/>
            <person name="Widdel F."/>
            <person name="Reinhardt R."/>
        </authorList>
    </citation>
    <scope>NUCLEOTIDE SEQUENCE [LARGE SCALE GENOMIC DNA]</scope>
    <source>
        <strain>DSM 19018 / LMG 30748 / EbN1</strain>
    </source>
</reference>
<organism>
    <name type="scientific">Aromatoleum aromaticum (strain DSM 19018 / LMG 30748 / EbN1)</name>
    <name type="common">Azoarcus sp. (strain EbN1)</name>
    <dbReference type="NCBI Taxonomy" id="76114"/>
    <lineage>
        <taxon>Bacteria</taxon>
        <taxon>Pseudomonadati</taxon>
        <taxon>Pseudomonadota</taxon>
        <taxon>Betaproteobacteria</taxon>
        <taxon>Rhodocyclales</taxon>
        <taxon>Rhodocyclaceae</taxon>
        <taxon>Aromatoleum</taxon>
    </lineage>
</organism>
<protein>
    <recommendedName>
        <fullName evidence="1">Isoleucine--tRNA ligase</fullName>
        <ecNumber evidence="1">6.1.1.5</ecNumber>
    </recommendedName>
    <alternativeName>
        <fullName evidence="1">Isoleucyl-tRNA synthetase</fullName>
        <shortName evidence="1">IleRS</shortName>
    </alternativeName>
</protein>
<sequence>MADYRKTLNMPDTPFPMRGDLAKREPGWVADWQAKKLYQKVRKAAAGRPKFVLHDGPPYANGDIHIGHAVNKILKDIIVRSKTLAGFDAPYVPGWDCHGLPIEHQIEKQHGKHLPADRARELCREYAAEQIERQKKDFIRLGVLGDWDNPYRTMNFSNEADEIRALGELFRKGFLFKGLKPVNWCFDCGSALAEAEVEYQDKKSPAIDVGFPLVDNERDKLAHAFGLDTLPEQPVYIVIWTTTPWTIPSNQALNVHPELIYELVETPKGLLILAAELRASALERYQLEGRVLAAARGVALDRINFRHPFYDRLSPVFLGDYVAADAGTGIVHSAPAYGLDDFVSCTRYGMRNDEILNPVQADGTFAGSLPFFGGLSVWDANPKIVDKLAEVGSLFASGTLTHSYMHCWRHKTPVIYRATTQWFVGMDRLPGREAVEPGSATLRELALKAVDETQFYPAWGKARLHSMIANRPDWCVSRQRNWGVPIPLFLHKETGEPHPRSLELLEQVAQRVEQHGIDAWFKLDAAELLGSDVAQYDKMRDTLDVWFDSGTTHWTVLRGSHAADSQWPAALYLEGSDQHRGWFHSSLLTGCAIDGRAPYDALLTHGFVVDGQGKKMSKSKGNVVAPQEVSDKLGAEILRLWVAATDYSGELTISKEILDRVVEVYRRLRNTLRFLLANTGDFDIARDGVPVEEWLDIDHYALALTRRLQEQVTGDYARFEFHKIVQALQNFAAEDLGAFYVDILKDRLYTTKADSRARRAAQTALWHITQAITRMMAPILTFTAEEIWRVTGNDAEDSVMLHTWHELPELGASDEILARWELIRSARAEVQKVLESLRSDGRIGASLQAEVRVRASGARFDALASVGADLHFVLITSRAELVRVETEADEGVDAAPSSHQKCGRCWHFREDIGVDADHPELCGRCCTNLHGDGESRTHA</sequence>
<evidence type="ECO:0000255" key="1">
    <source>
        <dbReference type="HAMAP-Rule" id="MF_02002"/>
    </source>
</evidence>
<proteinExistence type="inferred from homology"/>
<comment type="function">
    <text evidence="1">Catalyzes the attachment of isoleucine to tRNA(Ile). As IleRS can inadvertently accommodate and process structurally similar amino acids such as valine, to avoid such errors it has two additional distinct tRNA(Ile)-dependent editing activities. One activity is designated as 'pretransfer' editing and involves the hydrolysis of activated Val-AMP. The other activity is designated 'posttransfer' editing and involves deacylation of mischarged Val-tRNA(Ile).</text>
</comment>
<comment type="catalytic activity">
    <reaction evidence="1">
        <text>tRNA(Ile) + L-isoleucine + ATP = L-isoleucyl-tRNA(Ile) + AMP + diphosphate</text>
        <dbReference type="Rhea" id="RHEA:11060"/>
        <dbReference type="Rhea" id="RHEA-COMP:9666"/>
        <dbReference type="Rhea" id="RHEA-COMP:9695"/>
        <dbReference type="ChEBI" id="CHEBI:30616"/>
        <dbReference type="ChEBI" id="CHEBI:33019"/>
        <dbReference type="ChEBI" id="CHEBI:58045"/>
        <dbReference type="ChEBI" id="CHEBI:78442"/>
        <dbReference type="ChEBI" id="CHEBI:78528"/>
        <dbReference type="ChEBI" id="CHEBI:456215"/>
        <dbReference type="EC" id="6.1.1.5"/>
    </reaction>
</comment>
<comment type="cofactor">
    <cofactor evidence="1">
        <name>Zn(2+)</name>
        <dbReference type="ChEBI" id="CHEBI:29105"/>
    </cofactor>
    <text evidence="1">Binds 1 zinc ion per subunit.</text>
</comment>
<comment type="subunit">
    <text evidence="1">Monomer.</text>
</comment>
<comment type="subcellular location">
    <subcellularLocation>
        <location evidence="1">Cytoplasm</location>
    </subcellularLocation>
</comment>
<comment type="domain">
    <text evidence="1">IleRS has two distinct active sites: one for aminoacylation and one for editing. The misactivated valine is translocated from the active site to the editing site, which sterically excludes the correctly activated isoleucine. The single editing site contains two valyl binding pockets, one specific for each substrate (Val-AMP or Val-tRNA(Ile)).</text>
</comment>
<comment type="similarity">
    <text evidence="1">Belongs to the class-I aminoacyl-tRNA synthetase family. IleS type 1 subfamily.</text>
</comment>
<dbReference type="EC" id="6.1.1.5" evidence="1"/>
<dbReference type="EMBL" id="CR555306">
    <property type="protein sequence ID" value="CAI08643.1"/>
    <property type="molecule type" value="Genomic_DNA"/>
</dbReference>
<dbReference type="RefSeq" id="WP_011238327.1">
    <property type="nucleotide sequence ID" value="NC_006513.1"/>
</dbReference>
<dbReference type="SMR" id="Q5P221"/>
<dbReference type="STRING" id="76114.ebA4448"/>
<dbReference type="KEGG" id="eba:ebA4448"/>
<dbReference type="eggNOG" id="COG0060">
    <property type="taxonomic scope" value="Bacteria"/>
</dbReference>
<dbReference type="HOGENOM" id="CLU_001493_7_1_4"/>
<dbReference type="OrthoDB" id="9810365at2"/>
<dbReference type="Proteomes" id="UP000006552">
    <property type="component" value="Chromosome"/>
</dbReference>
<dbReference type="GO" id="GO:0005829">
    <property type="term" value="C:cytosol"/>
    <property type="evidence" value="ECO:0007669"/>
    <property type="project" value="TreeGrafter"/>
</dbReference>
<dbReference type="GO" id="GO:0002161">
    <property type="term" value="F:aminoacyl-tRNA deacylase activity"/>
    <property type="evidence" value="ECO:0007669"/>
    <property type="project" value="InterPro"/>
</dbReference>
<dbReference type="GO" id="GO:0005524">
    <property type="term" value="F:ATP binding"/>
    <property type="evidence" value="ECO:0007669"/>
    <property type="project" value="UniProtKB-UniRule"/>
</dbReference>
<dbReference type="GO" id="GO:0004822">
    <property type="term" value="F:isoleucine-tRNA ligase activity"/>
    <property type="evidence" value="ECO:0007669"/>
    <property type="project" value="UniProtKB-UniRule"/>
</dbReference>
<dbReference type="GO" id="GO:0000049">
    <property type="term" value="F:tRNA binding"/>
    <property type="evidence" value="ECO:0007669"/>
    <property type="project" value="InterPro"/>
</dbReference>
<dbReference type="GO" id="GO:0008270">
    <property type="term" value="F:zinc ion binding"/>
    <property type="evidence" value="ECO:0007669"/>
    <property type="project" value="UniProtKB-UniRule"/>
</dbReference>
<dbReference type="GO" id="GO:0006428">
    <property type="term" value="P:isoleucyl-tRNA aminoacylation"/>
    <property type="evidence" value="ECO:0007669"/>
    <property type="project" value="UniProtKB-UniRule"/>
</dbReference>
<dbReference type="CDD" id="cd07960">
    <property type="entry name" value="Anticodon_Ia_Ile_BEm"/>
    <property type="match status" value="1"/>
</dbReference>
<dbReference type="CDD" id="cd00818">
    <property type="entry name" value="IleRS_core"/>
    <property type="match status" value="1"/>
</dbReference>
<dbReference type="FunFam" id="3.40.50.620:FF:000042">
    <property type="entry name" value="Isoleucine--tRNA ligase"/>
    <property type="match status" value="1"/>
</dbReference>
<dbReference type="FunFam" id="3.40.50.620:FF:000048">
    <property type="entry name" value="Isoleucine--tRNA ligase"/>
    <property type="match status" value="1"/>
</dbReference>
<dbReference type="Gene3D" id="1.10.730.20">
    <property type="match status" value="1"/>
</dbReference>
<dbReference type="Gene3D" id="3.40.50.620">
    <property type="entry name" value="HUPs"/>
    <property type="match status" value="2"/>
</dbReference>
<dbReference type="Gene3D" id="1.10.10.830">
    <property type="entry name" value="Ile-tRNA synthetase CP2 domain-like"/>
    <property type="match status" value="1"/>
</dbReference>
<dbReference type="Gene3D" id="3.90.740.10">
    <property type="entry name" value="Valyl/Leucyl/Isoleucyl-tRNA synthetase, editing domain"/>
    <property type="match status" value="1"/>
</dbReference>
<dbReference type="HAMAP" id="MF_02002">
    <property type="entry name" value="Ile_tRNA_synth_type1"/>
    <property type="match status" value="1"/>
</dbReference>
<dbReference type="InterPro" id="IPR001412">
    <property type="entry name" value="aa-tRNA-synth_I_CS"/>
</dbReference>
<dbReference type="InterPro" id="IPR002300">
    <property type="entry name" value="aa-tRNA-synth_Ia"/>
</dbReference>
<dbReference type="InterPro" id="IPR033708">
    <property type="entry name" value="Anticodon_Ile_BEm"/>
</dbReference>
<dbReference type="InterPro" id="IPR002301">
    <property type="entry name" value="Ile-tRNA-ligase"/>
</dbReference>
<dbReference type="InterPro" id="IPR023585">
    <property type="entry name" value="Ile-tRNA-ligase_type1"/>
</dbReference>
<dbReference type="InterPro" id="IPR050081">
    <property type="entry name" value="Ile-tRNA_ligase"/>
</dbReference>
<dbReference type="InterPro" id="IPR013155">
    <property type="entry name" value="M/V/L/I-tRNA-synth_anticd-bd"/>
</dbReference>
<dbReference type="InterPro" id="IPR014729">
    <property type="entry name" value="Rossmann-like_a/b/a_fold"/>
</dbReference>
<dbReference type="InterPro" id="IPR009080">
    <property type="entry name" value="tRNAsynth_Ia_anticodon-bd"/>
</dbReference>
<dbReference type="InterPro" id="IPR009008">
    <property type="entry name" value="Val/Leu/Ile-tRNA-synth_edit"/>
</dbReference>
<dbReference type="InterPro" id="IPR010663">
    <property type="entry name" value="Znf_FPG/IleRS"/>
</dbReference>
<dbReference type="NCBIfam" id="TIGR00392">
    <property type="entry name" value="ileS"/>
    <property type="match status" value="1"/>
</dbReference>
<dbReference type="PANTHER" id="PTHR42765:SF1">
    <property type="entry name" value="ISOLEUCINE--TRNA LIGASE, MITOCHONDRIAL"/>
    <property type="match status" value="1"/>
</dbReference>
<dbReference type="PANTHER" id="PTHR42765">
    <property type="entry name" value="SOLEUCYL-TRNA SYNTHETASE"/>
    <property type="match status" value="1"/>
</dbReference>
<dbReference type="Pfam" id="PF08264">
    <property type="entry name" value="Anticodon_1"/>
    <property type="match status" value="1"/>
</dbReference>
<dbReference type="Pfam" id="PF00133">
    <property type="entry name" value="tRNA-synt_1"/>
    <property type="match status" value="1"/>
</dbReference>
<dbReference type="Pfam" id="PF06827">
    <property type="entry name" value="zf-FPG_IleRS"/>
    <property type="match status" value="1"/>
</dbReference>
<dbReference type="PRINTS" id="PR00984">
    <property type="entry name" value="TRNASYNTHILE"/>
</dbReference>
<dbReference type="SUPFAM" id="SSF47323">
    <property type="entry name" value="Anticodon-binding domain of a subclass of class I aminoacyl-tRNA synthetases"/>
    <property type="match status" value="1"/>
</dbReference>
<dbReference type="SUPFAM" id="SSF52374">
    <property type="entry name" value="Nucleotidylyl transferase"/>
    <property type="match status" value="1"/>
</dbReference>
<dbReference type="SUPFAM" id="SSF50677">
    <property type="entry name" value="ValRS/IleRS/LeuRS editing domain"/>
    <property type="match status" value="1"/>
</dbReference>
<dbReference type="PROSITE" id="PS00178">
    <property type="entry name" value="AA_TRNA_LIGASE_I"/>
    <property type="match status" value="1"/>
</dbReference>
<accession>Q5P221</accession>
<gene>
    <name evidence="1" type="primary">ileS</name>
    <name type="ordered locus">AZOSEA25180</name>
    <name type="ORF">ebA4448</name>
</gene>